<reference key="1">
    <citation type="journal article" date="2002" name="Proc. Natl. Acad. Sci. U.S.A.">
        <title>The Brucella suis genome reveals fundamental similarities between animal and plant pathogens and symbionts.</title>
        <authorList>
            <person name="Paulsen I.T."/>
            <person name="Seshadri R."/>
            <person name="Nelson K.E."/>
            <person name="Eisen J.A."/>
            <person name="Heidelberg J.F."/>
            <person name="Read T.D."/>
            <person name="Dodson R.J."/>
            <person name="Umayam L.A."/>
            <person name="Brinkac L.M."/>
            <person name="Beanan M.J."/>
            <person name="Daugherty S.C."/>
            <person name="DeBoy R.T."/>
            <person name="Durkin A.S."/>
            <person name="Kolonay J.F."/>
            <person name="Madupu R."/>
            <person name="Nelson W.C."/>
            <person name="Ayodeji B."/>
            <person name="Kraul M."/>
            <person name="Shetty J."/>
            <person name="Malek J.A."/>
            <person name="Van Aken S.E."/>
            <person name="Riedmuller S."/>
            <person name="Tettelin H."/>
            <person name="Gill S.R."/>
            <person name="White O."/>
            <person name="Salzberg S.L."/>
            <person name="Hoover D.L."/>
            <person name="Lindler L.E."/>
            <person name="Halling S.M."/>
            <person name="Boyle S.M."/>
            <person name="Fraser C.M."/>
        </authorList>
    </citation>
    <scope>NUCLEOTIDE SEQUENCE [LARGE SCALE GENOMIC DNA]</scope>
    <source>
        <strain>1330</strain>
    </source>
</reference>
<reference key="2">
    <citation type="journal article" date="2011" name="J. Bacteriol.">
        <title>Revised genome sequence of Brucella suis 1330.</title>
        <authorList>
            <person name="Tae H."/>
            <person name="Shallom S."/>
            <person name="Settlage R."/>
            <person name="Preston D."/>
            <person name="Adams L.G."/>
            <person name="Garner H.R."/>
        </authorList>
    </citation>
    <scope>NUCLEOTIDE SEQUENCE [LARGE SCALE GENOMIC DNA]</scope>
    <source>
        <strain>1330</strain>
    </source>
</reference>
<evidence type="ECO:0000255" key="1">
    <source>
        <dbReference type="HAMAP-Rule" id="MF_00081"/>
    </source>
</evidence>
<evidence type="ECO:0000305" key="2"/>
<sequence>MMRPPEHQLLSSLDQRSRDIFRLIVETYLNDGDPVGSRNLSRLLPHTLSPATIRNVMSDLEHLGLIYAPHISAGRLPTQIGLRFFVDAFLEVGDLPPEERSSIEAQVRAAGTSNSVESVLTEASQVLSGLSRGAGLVLTNKTDVALKHIEFVRLEPMRALAVLVMQNGDVENRVIDLPAGISTSQLIEASNFLNAHIHGHTLSEAKSELRKLSEETRRELDQLSQELVAKGLAVWSGAGADQPARLIVRGRANLLENVHAQEDIERLRHLFDDLETKDGMVQLLDLAEAGSGVRIFIGSENKLFSLSGSSLVVAPYRDSEQRVIGALGVIGPTRLNYARIVPMVDYTAQIVSRLLR</sequence>
<keyword id="KW-0678">Repressor</keyword>
<keyword id="KW-0346">Stress response</keyword>
<keyword id="KW-0804">Transcription</keyword>
<keyword id="KW-0805">Transcription regulation</keyword>
<dbReference type="EMBL" id="AE014291">
    <property type="protein sequence ID" value="AAN29125.1"/>
    <property type="status" value="ALT_INIT"/>
    <property type="molecule type" value="Genomic_DNA"/>
</dbReference>
<dbReference type="EMBL" id="CP002997">
    <property type="protein sequence ID" value="AEM17537.1"/>
    <property type="status" value="ALT_INIT"/>
    <property type="molecule type" value="Genomic_DNA"/>
</dbReference>
<dbReference type="RefSeq" id="WP_002965420.1">
    <property type="nucleotide sequence ID" value="NZ_KN046804.1"/>
</dbReference>
<dbReference type="SMR" id="P64397"/>
<dbReference type="GeneID" id="93017361"/>
<dbReference type="KEGG" id="bms:BR0172"/>
<dbReference type="KEGG" id="bsi:BS1330_I0172"/>
<dbReference type="PATRIC" id="fig|204722.22.peg.1660"/>
<dbReference type="HOGENOM" id="CLU_050019_0_0_5"/>
<dbReference type="PhylomeDB" id="P64397"/>
<dbReference type="Proteomes" id="UP000007104">
    <property type="component" value="Chromosome I"/>
</dbReference>
<dbReference type="GO" id="GO:0003677">
    <property type="term" value="F:DNA binding"/>
    <property type="evidence" value="ECO:0007669"/>
    <property type="project" value="InterPro"/>
</dbReference>
<dbReference type="GO" id="GO:0045892">
    <property type="term" value="P:negative regulation of DNA-templated transcription"/>
    <property type="evidence" value="ECO:0007669"/>
    <property type="project" value="UniProtKB-UniRule"/>
</dbReference>
<dbReference type="Gene3D" id="3.30.450.40">
    <property type="match status" value="1"/>
</dbReference>
<dbReference type="Gene3D" id="3.30.390.60">
    <property type="entry name" value="Heat-inducible transcription repressor hrca homolog, domain 3"/>
    <property type="match status" value="1"/>
</dbReference>
<dbReference type="Gene3D" id="1.10.10.10">
    <property type="entry name" value="Winged helix-like DNA-binding domain superfamily/Winged helix DNA-binding domain"/>
    <property type="match status" value="1"/>
</dbReference>
<dbReference type="HAMAP" id="MF_00081">
    <property type="entry name" value="HrcA"/>
    <property type="match status" value="1"/>
</dbReference>
<dbReference type="InterPro" id="IPR029016">
    <property type="entry name" value="GAF-like_dom_sf"/>
</dbReference>
<dbReference type="InterPro" id="IPR002571">
    <property type="entry name" value="HrcA"/>
</dbReference>
<dbReference type="InterPro" id="IPR021153">
    <property type="entry name" value="HrcA_C"/>
</dbReference>
<dbReference type="InterPro" id="IPR036388">
    <property type="entry name" value="WH-like_DNA-bd_sf"/>
</dbReference>
<dbReference type="InterPro" id="IPR036390">
    <property type="entry name" value="WH_DNA-bd_sf"/>
</dbReference>
<dbReference type="InterPro" id="IPR023120">
    <property type="entry name" value="WHTH_transcript_rep_HrcA_IDD"/>
</dbReference>
<dbReference type="NCBIfam" id="TIGR00331">
    <property type="entry name" value="hrcA"/>
    <property type="match status" value="1"/>
</dbReference>
<dbReference type="PANTHER" id="PTHR34824">
    <property type="entry name" value="HEAT-INDUCIBLE TRANSCRIPTION REPRESSOR HRCA"/>
    <property type="match status" value="1"/>
</dbReference>
<dbReference type="PANTHER" id="PTHR34824:SF1">
    <property type="entry name" value="HEAT-INDUCIBLE TRANSCRIPTION REPRESSOR HRCA"/>
    <property type="match status" value="1"/>
</dbReference>
<dbReference type="Pfam" id="PF01628">
    <property type="entry name" value="HrcA"/>
    <property type="match status" value="1"/>
</dbReference>
<dbReference type="PIRSF" id="PIRSF005485">
    <property type="entry name" value="HrcA"/>
    <property type="match status" value="1"/>
</dbReference>
<dbReference type="SUPFAM" id="SSF55781">
    <property type="entry name" value="GAF domain-like"/>
    <property type="match status" value="1"/>
</dbReference>
<dbReference type="SUPFAM" id="SSF46785">
    <property type="entry name" value="Winged helix' DNA-binding domain"/>
    <property type="match status" value="1"/>
</dbReference>
<comment type="function">
    <text evidence="1">Negative regulator of class I heat shock genes (grpE-dnaK-dnaJ and groELS operons). Prevents heat-shock induction of these operons.</text>
</comment>
<comment type="similarity">
    <text evidence="1">Belongs to the HrcA family.</text>
</comment>
<comment type="sequence caution" evidence="2">
    <conflict type="erroneous initiation">
        <sequence resource="EMBL-CDS" id="AAN29125"/>
    </conflict>
</comment>
<comment type="sequence caution" evidence="2">
    <conflict type="erroneous initiation">
        <sequence resource="EMBL-CDS" id="AEM17537"/>
    </conflict>
    <text>Extended N-terminus.</text>
</comment>
<protein>
    <recommendedName>
        <fullName evidence="1">Heat-inducible transcription repressor HrcA</fullName>
    </recommendedName>
</protein>
<organism>
    <name type="scientific">Brucella suis biovar 1 (strain 1330)</name>
    <dbReference type="NCBI Taxonomy" id="204722"/>
    <lineage>
        <taxon>Bacteria</taxon>
        <taxon>Pseudomonadati</taxon>
        <taxon>Pseudomonadota</taxon>
        <taxon>Alphaproteobacteria</taxon>
        <taxon>Hyphomicrobiales</taxon>
        <taxon>Brucellaceae</taxon>
        <taxon>Brucella/Ochrobactrum group</taxon>
        <taxon>Brucella</taxon>
    </lineage>
</organism>
<feature type="chain" id="PRO_0000182459" description="Heat-inducible transcription repressor HrcA">
    <location>
        <begin position="1"/>
        <end position="356"/>
    </location>
</feature>
<accession>P64397</accession>
<accession>G0KBE5</accession>
<accession>Q8YEV1</accession>
<proteinExistence type="inferred from homology"/>
<gene>
    <name evidence="1" type="primary">hrcA</name>
    <name type="ordered locus">BR0172</name>
    <name type="ordered locus">BS1330_I0172</name>
</gene>
<name>HRCA_BRUSU</name>